<dbReference type="EC" id="2.7.7.6" evidence="1"/>
<dbReference type="EMBL" id="CP001400">
    <property type="protein sequence ID" value="ACP38409.1"/>
    <property type="molecule type" value="Genomic_DNA"/>
</dbReference>
<dbReference type="RefSeq" id="WP_009988725.1">
    <property type="nucleotide sequence ID" value="NC_012588.1"/>
</dbReference>
<dbReference type="SMR" id="C3MWV9"/>
<dbReference type="KEGG" id="sia:M1425_1660"/>
<dbReference type="HOGENOM" id="CLU_179456_2_0_2"/>
<dbReference type="Proteomes" id="UP000001350">
    <property type="component" value="Chromosome"/>
</dbReference>
<dbReference type="GO" id="GO:0005737">
    <property type="term" value="C:cytoplasm"/>
    <property type="evidence" value="ECO:0007669"/>
    <property type="project" value="UniProtKB-SubCell"/>
</dbReference>
<dbReference type="GO" id="GO:0000428">
    <property type="term" value="C:DNA-directed RNA polymerase complex"/>
    <property type="evidence" value="ECO:0007669"/>
    <property type="project" value="UniProtKB-KW"/>
</dbReference>
<dbReference type="GO" id="GO:0003677">
    <property type="term" value="F:DNA binding"/>
    <property type="evidence" value="ECO:0007669"/>
    <property type="project" value="InterPro"/>
</dbReference>
<dbReference type="GO" id="GO:0003899">
    <property type="term" value="F:DNA-directed RNA polymerase activity"/>
    <property type="evidence" value="ECO:0007669"/>
    <property type="project" value="UniProtKB-UniRule"/>
</dbReference>
<dbReference type="GO" id="GO:0008270">
    <property type="term" value="F:zinc ion binding"/>
    <property type="evidence" value="ECO:0007669"/>
    <property type="project" value="UniProtKB-UniRule"/>
</dbReference>
<dbReference type="GO" id="GO:0006351">
    <property type="term" value="P:DNA-templated transcription"/>
    <property type="evidence" value="ECO:0007669"/>
    <property type="project" value="UniProtKB-UniRule"/>
</dbReference>
<dbReference type="Gene3D" id="2.20.28.30">
    <property type="entry name" value="RNA polymerase ii, chain L"/>
    <property type="match status" value="1"/>
</dbReference>
<dbReference type="HAMAP" id="MF_00615">
    <property type="entry name" value="RNApol_arch_Rpo12"/>
    <property type="match status" value="1"/>
</dbReference>
<dbReference type="InterPro" id="IPR006591">
    <property type="entry name" value="RNAP_P/RPABC4"/>
</dbReference>
<dbReference type="InterPro" id="IPR029040">
    <property type="entry name" value="RPABC4/Spt4"/>
</dbReference>
<dbReference type="InterPro" id="IPR023464">
    <property type="entry name" value="Rpo12"/>
</dbReference>
<dbReference type="NCBIfam" id="NF001604">
    <property type="entry name" value="PRK00398.1-1"/>
    <property type="match status" value="1"/>
</dbReference>
<dbReference type="SMART" id="SM00659">
    <property type="entry name" value="RPOLCX"/>
    <property type="match status" value="1"/>
</dbReference>
<dbReference type="SUPFAM" id="SSF63393">
    <property type="entry name" value="RNA polymerase subunits"/>
    <property type="match status" value="1"/>
</dbReference>
<accession>C3MWV9</accession>
<protein>
    <recommendedName>
        <fullName evidence="1">DNA-directed RNA polymerase subunit Rpo12</fullName>
        <ecNumber evidence="1">2.7.7.6</ecNumber>
    </recommendedName>
    <alternativeName>
        <fullName evidence="1">DNA-directed RNA polymerase subunit P</fullName>
    </alternativeName>
</protein>
<reference key="1">
    <citation type="journal article" date="2009" name="Proc. Natl. Acad. Sci. U.S.A.">
        <title>Biogeography of the Sulfolobus islandicus pan-genome.</title>
        <authorList>
            <person name="Reno M.L."/>
            <person name="Held N.L."/>
            <person name="Fields C.J."/>
            <person name="Burke P.V."/>
            <person name="Whitaker R.J."/>
        </authorList>
    </citation>
    <scope>NUCLEOTIDE SEQUENCE [LARGE SCALE GENOMIC DNA]</scope>
    <source>
        <strain>M.14.25 / Kamchatka #1</strain>
    </source>
</reference>
<name>RPO12_SACI4</name>
<sequence>MAVYRCGKCWKTFTDEQLKVLPGVRCPYCGYKIIFMVRKPTIKIVKAI</sequence>
<organism>
    <name type="scientific">Saccharolobus islandicus (strain M.14.25 / Kamchatka #1)</name>
    <name type="common">Sulfolobus islandicus</name>
    <dbReference type="NCBI Taxonomy" id="427317"/>
    <lineage>
        <taxon>Archaea</taxon>
        <taxon>Thermoproteota</taxon>
        <taxon>Thermoprotei</taxon>
        <taxon>Sulfolobales</taxon>
        <taxon>Sulfolobaceae</taxon>
        <taxon>Saccharolobus</taxon>
    </lineage>
</organism>
<proteinExistence type="inferred from homology"/>
<keyword id="KW-0963">Cytoplasm</keyword>
<keyword id="KW-0240">DNA-directed RNA polymerase</keyword>
<keyword id="KW-0479">Metal-binding</keyword>
<keyword id="KW-0548">Nucleotidyltransferase</keyword>
<keyword id="KW-0804">Transcription</keyword>
<keyword id="KW-0808">Transferase</keyword>
<keyword id="KW-0862">Zinc</keyword>
<comment type="function">
    <text evidence="1">DNA-dependent RNA polymerase (RNAP) catalyzes the transcription of DNA into RNA using the four ribonucleoside triphosphates as substrates.</text>
</comment>
<comment type="catalytic activity">
    <reaction evidence="1">
        <text>RNA(n) + a ribonucleoside 5'-triphosphate = RNA(n+1) + diphosphate</text>
        <dbReference type="Rhea" id="RHEA:21248"/>
        <dbReference type="Rhea" id="RHEA-COMP:14527"/>
        <dbReference type="Rhea" id="RHEA-COMP:17342"/>
        <dbReference type="ChEBI" id="CHEBI:33019"/>
        <dbReference type="ChEBI" id="CHEBI:61557"/>
        <dbReference type="ChEBI" id="CHEBI:140395"/>
        <dbReference type="EC" id="2.7.7.6"/>
    </reaction>
</comment>
<comment type="cofactor">
    <cofactor evidence="1">
        <name>Zn(2+)</name>
        <dbReference type="ChEBI" id="CHEBI:29105"/>
    </cofactor>
    <text evidence="1">Binds 1 zinc ion.</text>
</comment>
<comment type="subunit">
    <text evidence="1">Part of the RNA polymerase complex.</text>
</comment>
<comment type="subcellular location">
    <subcellularLocation>
        <location evidence="1">Cytoplasm</location>
    </subcellularLocation>
</comment>
<comment type="similarity">
    <text evidence="1">Belongs to the archaeal Rpo12/eukaryotic RPC10 RNA polymerase subunit family.</text>
</comment>
<gene>
    <name evidence="1" type="primary">rpo12</name>
    <name evidence="1" type="synonym">rpoP</name>
    <name type="ordered locus">M1425_1660</name>
</gene>
<feature type="chain" id="PRO_1000212276" description="DNA-directed RNA polymerase subunit Rpo12">
    <location>
        <begin position="1"/>
        <end position="48"/>
    </location>
</feature>
<feature type="binding site" evidence="1">
    <location>
        <position position="9"/>
    </location>
    <ligand>
        <name>Zn(2+)</name>
        <dbReference type="ChEBI" id="CHEBI:29105"/>
    </ligand>
</feature>
<feature type="binding site" evidence="1">
    <location>
        <position position="26"/>
    </location>
    <ligand>
        <name>Zn(2+)</name>
        <dbReference type="ChEBI" id="CHEBI:29105"/>
    </ligand>
</feature>
<feature type="binding site" evidence="1">
    <location>
        <position position="29"/>
    </location>
    <ligand>
        <name>Zn(2+)</name>
        <dbReference type="ChEBI" id="CHEBI:29105"/>
    </ligand>
</feature>
<evidence type="ECO:0000255" key="1">
    <source>
        <dbReference type="HAMAP-Rule" id="MF_00615"/>
    </source>
</evidence>